<accession>Q8A469</accession>
<proteinExistence type="inferred from homology"/>
<protein>
    <recommendedName>
        <fullName evidence="1">DNA-directed RNA polymerase subunit beta</fullName>
        <shortName evidence="1">RNAP subunit beta</shortName>
        <ecNumber evidence="1">2.7.7.6</ecNumber>
    </recommendedName>
    <alternativeName>
        <fullName evidence="1">RNA polymerase subunit beta</fullName>
    </alternativeName>
    <alternativeName>
        <fullName evidence="1">Transcriptase subunit beta</fullName>
    </alternativeName>
</protein>
<name>RPOB_BACTN</name>
<sequence>MSSNTVNQRVNFASTKNPLEYPDFLEVQLKSFQDFLQLDTPPEKRKNEGLYKVFAENFPIADTRNNFVLEFLDYYIDPPRYTIDDCIERGLTYSVPLKAKLKLYCTDPDHEDFDTVIQDVFLGPIPYMTDKATFVINGAERVVVSQLHRSPGVFFGQSVHANGTKLYSARIIPFKGSWIEFATDINNVMYAYIDRKKKLPVTTLLRAIGFENDKDILEIFNLAEDVKVNKTNLKRVLGRKLAARVLKTWIEDFVDEDTGEVVSIERNEVIIDRETVLEEVHIDEILESGVQNILLHKDEPNQSDFSIIYNTLQKDPSNSEKEAVLYIYRQLRNADPADDASAREVINNLFFSEKRYDLGDVGRYRINKKLNLTTDMDVRVLTKEDIIEIIKYLIELINSKADVDDIDHLSNRRVRTVGEQLSNQFAVGLARMSRTIRERMNVRDNEVFTPIDLINAKTISSVINSFFGTNALSQFMDQTNPLAEITHKRRMSALGPGGLSRERAGFEVRDVHYTHYGRLCPIETPEGPNIGLISSLCVFAKINELGFIETPYRKVENGKVDLSDNGLVYLTAEEEEEKIIAQGNAPLNDDGTFVRNKVKSRQDADFPVVEPSEVDLMDVSPQQIASIAASLIPFLEHDDANRALMGSNMMRQAVPLLRSEAPIVGTGIERQLVRDSRTQITAEGDGVVDFVDATTIRILYDRTEDEEFVSFEPALKEYRIPKFRKTNQNMTIDLRPICDKGQRVKKGDILTEGYSTEKGELALGKNLLVAYMPWKGYNYEDAIVLNERVVREDLLTSVHVEEYSLEVRETKRGMEELTSDIPNVSEEATKDLDENGIVRIGARIEPGDIMIGKITPKGESDPSPEEKLLRAIFGDKAGDVKDASLKASPSLKGVVIDKKLFSRVIKNRSSKLADKALLPKIDDEFESKVADLKRILVKKLMTLTEGKVSQGVKDYLGAEVIAKGSKFSASDFDSLDFTSIQLSNWTSDDHTNGMVRDLVMNFIKKYKELDAELKRKKFAITIGDELPAGIIQMAKVYIAKKRKIGVGDKMAGRHGNKGIVSRVVRQEDMPFLADGTPVDIVLNPLGVPSRMNIGQIFEAVLGRAGKTLGVKFATPIFDGATMDDLDQWTDKAGLPRYCKTYLCDGGTGEQFDQAATVGVTYMLKLGHMVEDKMHARSIGPYSLITQQPLGGKAQFGGQRFGEMEVWALEGFGAAHILQEILTIKSDDVVGRSKAYEAIVKGEPMPQPGIPESLNVLLHELRGLGLSINLE</sequence>
<reference key="1">
    <citation type="journal article" date="2003" name="Science">
        <title>A genomic view of the human-Bacteroides thetaiotaomicron symbiosis.</title>
        <authorList>
            <person name="Xu J."/>
            <person name="Bjursell M.K."/>
            <person name="Himrod J."/>
            <person name="Deng S."/>
            <person name="Carmichael L.K."/>
            <person name="Chiang H.C."/>
            <person name="Hooper L.V."/>
            <person name="Gordon J.I."/>
        </authorList>
    </citation>
    <scope>NUCLEOTIDE SEQUENCE [LARGE SCALE GENOMIC DNA]</scope>
    <source>
        <strain>ATCC 29148 / DSM 2079 / JCM 5827 / CCUG 10774 / NCTC 10582 / VPI-5482 / E50</strain>
    </source>
</reference>
<organism>
    <name type="scientific">Bacteroides thetaiotaomicron (strain ATCC 29148 / DSM 2079 / JCM 5827 / CCUG 10774 / NCTC 10582 / VPI-5482 / E50)</name>
    <dbReference type="NCBI Taxonomy" id="226186"/>
    <lineage>
        <taxon>Bacteria</taxon>
        <taxon>Pseudomonadati</taxon>
        <taxon>Bacteroidota</taxon>
        <taxon>Bacteroidia</taxon>
        <taxon>Bacteroidales</taxon>
        <taxon>Bacteroidaceae</taxon>
        <taxon>Bacteroides</taxon>
    </lineage>
</organism>
<keyword id="KW-0240">DNA-directed RNA polymerase</keyword>
<keyword id="KW-0548">Nucleotidyltransferase</keyword>
<keyword id="KW-1185">Reference proteome</keyword>
<keyword id="KW-0804">Transcription</keyword>
<keyword id="KW-0808">Transferase</keyword>
<gene>
    <name evidence="1" type="primary">rpoB</name>
    <name type="ordered locus">BT_2734</name>
</gene>
<dbReference type="EC" id="2.7.7.6" evidence="1"/>
<dbReference type="EMBL" id="AE015928">
    <property type="protein sequence ID" value="AAO77840.1"/>
    <property type="molecule type" value="Genomic_DNA"/>
</dbReference>
<dbReference type="RefSeq" id="NP_811646.1">
    <property type="nucleotide sequence ID" value="NC_004663.1"/>
</dbReference>
<dbReference type="RefSeq" id="WP_008762029.1">
    <property type="nucleotide sequence ID" value="NZ_UYXG01000001.1"/>
</dbReference>
<dbReference type="SMR" id="Q8A469"/>
<dbReference type="FunCoup" id="Q8A469">
    <property type="interactions" value="554"/>
</dbReference>
<dbReference type="STRING" id="226186.BT_2734"/>
<dbReference type="PaxDb" id="226186-BT_2734"/>
<dbReference type="EnsemblBacteria" id="AAO77840">
    <property type="protein sequence ID" value="AAO77840"/>
    <property type="gene ID" value="BT_2734"/>
</dbReference>
<dbReference type="GeneID" id="69587594"/>
<dbReference type="KEGG" id="bth:BT_2734"/>
<dbReference type="PATRIC" id="fig|226186.12.peg.2777"/>
<dbReference type="eggNOG" id="COG0085">
    <property type="taxonomic scope" value="Bacteria"/>
</dbReference>
<dbReference type="HOGENOM" id="CLU_000524_4_3_10"/>
<dbReference type="InParanoid" id="Q8A469"/>
<dbReference type="OrthoDB" id="9803954at2"/>
<dbReference type="Proteomes" id="UP000001414">
    <property type="component" value="Chromosome"/>
</dbReference>
<dbReference type="GO" id="GO:0000428">
    <property type="term" value="C:DNA-directed RNA polymerase complex"/>
    <property type="evidence" value="ECO:0007669"/>
    <property type="project" value="UniProtKB-KW"/>
</dbReference>
<dbReference type="GO" id="GO:0003677">
    <property type="term" value="F:DNA binding"/>
    <property type="evidence" value="ECO:0007669"/>
    <property type="project" value="UniProtKB-UniRule"/>
</dbReference>
<dbReference type="GO" id="GO:0003899">
    <property type="term" value="F:DNA-directed RNA polymerase activity"/>
    <property type="evidence" value="ECO:0007669"/>
    <property type="project" value="UniProtKB-UniRule"/>
</dbReference>
<dbReference type="GO" id="GO:0032549">
    <property type="term" value="F:ribonucleoside binding"/>
    <property type="evidence" value="ECO:0007669"/>
    <property type="project" value="InterPro"/>
</dbReference>
<dbReference type="GO" id="GO:0006351">
    <property type="term" value="P:DNA-templated transcription"/>
    <property type="evidence" value="ECO:0007669"/>
    <property type="project" value="UniProtKB-UniRule"/>
</dbReference>
<dbReference type="CDD" id="cd00653">
    <property type="entry name" value="RNA_pol_B_RPB2"/>
    <property type="match status" value="1"/>
</dbReference>
<dbReference type="Gene3D" id="2.40.50.100">
    <property type="match status" value="1"/>
</dbReference>
<dbReference type="Gene3D" id="2.40.50.150">
    <property type="match status" value="1"/>
</dbReference>
<dbReference type="Gene3D" id="3.90.1100.10">
    <property type="match status" value="2"/>
</dbReference>
<dbReference type="Gene3D" id="2.30.150.10">
    <property type="entry name" value="DNA-directed RNA polymerase, beta subunit, external 1 domain"/>
    <property type="match status" value="1"/>
</dbReference>
<dbReference type="Gene3D" id="2.40.270.10">
    <property type="entry name" value="DNA-directed RNA polymerase, subunit 2, domain 6"/>
    <property type="match status" value="2"/>
</dbReference>
<dbReference type="Gene3D" id="3.90.1800.10">
    <property type="entry name" value="RNA polymerase alpha subunit dimerisation domain"/>
    <property type="match status" value="1"/>
</dbReference>
<dbReference type="Gene3D" id="3.90.1110.10">
    <property type="entry name" value="RNA polymerase Rpb2, domain 2"/>
    <property type="match status" value="1"/>
</dbReference>
<dbReference type="HAMAP" id="MF_01321">
    <property type="entry name" value="RNApol_bact_RpoB"/>
    <property type="match status" value="1"/>
</dbReference>
<dbReference type="InterPro" id="IPR042107">
    <property type="entry name" value="DNA-dir_RNA_pol_bsu_ext_1_sf"/>
</dbReference>
<dbReference type="InterPro" id="IPR019462">
    <property type="entry name" value="DNA-dir_RNA_pol_bsu_external_1"/>
</dbReference>
<dbReference type="InterPro" id="IPR015712">
    <property type="entry name" value="DNA-dir_RNA_pol_su2"/>
</dbReference>
<dbReference type="InterPro" id="IPR007120">
    <property type="entry name" value="DNA-dir_RNAP_su2_dom"/>
</dbReference>
<dbReference type="InterPro" id="IPR037033">
    <property type="entry name" value="DNA-dir_RNAP_su2_hyb_sf"/>
</dbReference>
<dbReference type="InterPro" id="IPR010243">
    <property type="entry name" value="RNA_pol_bsu_bac"/>
</dbReference>
<dbReference type="InterPro" id="IPR007121">
    <property type="entry name" value="RNA_pol_bsu_CS"/>
</dbReference>
<dbReference type="InterPro" id="IPR007644">
    <property type="entry name" value="RNA_pol_bsu_protrusion"/>
</dbReference>
<dbReference type="InterPro" id="IPR007642">
    <property type="entry name" value="RNA_pol_Rpb2_2"/>
</dbReference>
<dbReference type="InterPro" id="IPR037034">
    <property type="entry name" value="RNA_pol_Rpb2_2_sf"/>
</dbReference>
<dbReference type="InterPro" id="IPR007645">
    <property type="entry name" value="RNA_pol_Rpb2_3"/>
</dbReference>
<dbReference type="InterPro" id="IPR007641">
    <property type="entry name" value="RNA_pol_Rpb2_7"/>
</dbReference>
<dbReference type="InterPro" id="IPR014724">
    <property type="entry name" value="RNA_pol_RPB2_OB-fold"/>
</dbReference>
<dbReference type="NCBIfam" id="NF001616">
    <property type="entry name" value="PRK00405.1"/>
    <property type="match status" value="1"/>
</dbReference>
<dbReference type="NCBIfam" id="TIGR02013">
    <property type="entry name" value="rpoB"/>
    <property type="match status" value="1"/>
</dbReference>
<dbReference type="PANTHER" id="PTHR20856">
    <property type="entry name" value="DNA-DIRECTED RNA POLYMERASE I SUBUNIT 2"/>
    <property type="match status" value="1"/>
</dbReference>
<dbReference type="Pfam" id="PF04563">
    <property type="entry name" value="RNA_pol_Rpb2_1"/>
    <property type="match status" value="2"/>
</dbReference>
<dbReference type="Pfam" id="PF04561">
    <property type="entry name" value="RNA_pol_Rpb2_2"/>
    <property type="match status" value="2"/>
</dbReference>
<dbReference type="Pfam" id="PF04565">
    <property type="entry name" value="RNA_pol_Rpb2_3"/>
    <property type="match status" value="1"/>
</dbReference>
<dbReference type="Pfam" id="PF10385">
    <property type="entry name" value="RNA_pol_Rpb2_45"/>
    <property type="match status" value="1"/>
</dbReference>
<dbReference type="Pfam" id="PF00562">
    <property type="entry name" value="RNA_pol_Rpb2_6"/>
    <property type="match status" value="1"/>
</dbReference>
<dbReference type="Pfam" id="PF04560">
    <property type="entry name" value="RNA_pol_Rpb2_7"/>
    <property type="match status" value="1"/>
</dbReference>
<dbReference type="SUPFAM" id="SSF64484">
    <property type="entry name" value="beta and beta-prime subunits of DNA dependent RNA-polymerase"/>
    <property type="match status" value="1"/>
</dbReference>
<dbReference type="PROSITE" id="PS01166">
    <property type="entry name" value="RNA_POL_BETA"/>
    <property type="match status" value="1"/>
</dbReference>
<feature type="chain" id="PRO_0000047861" description="DNA-directed RNA polymerase subunit beta">
    <location>
        <begin position="1"/>
        <end position="1270"/>
    </location>
</feature>
<comment type="function">
    <text evidence="1">DNA-dependent RNA polymerase catalyzes the transcription of DNA into RNA using the four ribonucleoside triphosphates as substrates.</text>
</comment>
<comment type="catalytic activity">
    <reaction evidence="1">
        <text>RNA(n) + a ribonucleoside 5'-triphosphate = RNA(n+1) + diphosphate</text>
        <dbReference type="Rhea" id="RHEA:21248"/>
        <dbReference type="Rhea" id="RHEA-COMP:14527"/>
        <dbReference type="Rhea" id="RHEA-COMP:17342"/>
        <dbReference type="ChEBI" id="CHEBI:33019"/>
        <dbReference type="ChEBI" id="CHEBI:61557"/>
        <dbReference type="ChEBI" id="CHEBI:140395"/>
        <dbReference type="EC" id="2.7.7.6"/>
    </reaction>
</comment>
<comment type="subunit">
    <text evidence="1">The RNAP catalytic core consists of 2 alpha, 1 beta, 1 beta' and 1 omega subunit. When a sigma factor is associated with the core the holoenzyme is formed, which can initiate transcription.</text>
</comment>
<comment type="similarity">
    <text evidence="1">Belongs to the RNA polymerase beta chain family.</text>
</comment>
<evidence type="ECO:0000255" key="1">
    <source>
        <dbReference type="HAMAP-Rule" id="MF_01321"/>
    </source>
</evidence>